<organism>
    <name type="scientific">Shigella boydii serotype 4 (strain Sb227)</name>
    <dbReference type="NCBI Taxonomy" id="300268"/>
    <lineage>
        <taxon>Bacteria</taxon>
        <taxon>Pseudomonadati</taxon>
        <taxon>Pseudomonadota</taxon>
        <taxon>Gammaproteobacteria</taxon>
        <taxon>Enterobacterales</taxon>
        <taxon>Enterobacteriaceae</taxon>
        <taxon>Shigella</taxon>
    </lineage>
</organism>
<feature type="chain" id="PRO_0000234520" description="Protein TusB">
    <location>
        <begin position="1"/>
        <end position="95"/>
    </location>
</feature>
<protein>
    <recommendedName>
        <fullName evidence="1">Protein TusB</fullName>
    </recommendedName>
    <alternativeName>
        <fullName evidence="1">tRNA 2-thiouridine synthesizing protein B</fullName>
    </alternativeName>
</protein>
<name>TUSB_SHIBS</name>
<accession>P0C1C4</accession>
<gene>
    <name evidence="1" type="primary">tusB</name>
    <name type="ordered locus">SBO_3323.1</name>
</gene>
<proteinExistence type="inferred from homology"/>
<keyword id="KW-0963">Cytoplasm</keyword>
<keyword id="KW-0819">tRNA processing</keyword>
<comment type="function">
    <text evidence="1">Part of a sulfur-relay system required for 2-thiolation of 5-methylaminomethyl-2-thiouridine (mnm(5)s(2)U) at tRNA wobble positions.</text>
</comment>
<comment type="subunit">
    <text evidence="1">Heterohexamer, formed by a dimer of trimers. The hexameric TusBCD complex contains 2 copies each of TusB, TusC and TusD. The TusBCD complex interacts with TusE.</text>
</comment>
<comment type="subcellular location">
    <subcellularLocation>
        <location evidence="1">Cytoplasm</location>
    </subcellularLocation>
</comment>
<comment type="similarity">
    <text evidence="1">Belongs to the DsrH/TusB family.</text>
</comment>
<reference key="1">
    <citation type="journal article" date="2005" name="Nucleic Acids Res.">
        <title>Genome dynamics and diversity of Shigella species, the etiologic agents of bacillary dysentery.</title>
        <authorList>
            <person name="Yang F."/>
            <person name="Yang J."/>
            <person name="Zhang X."/>
            <person name="Chen L."/>
            <person name="Jiang Y."/>
            <person name="Yan Y."/>
            <person name="Tang X."/>
            <person name="Wang J."/>
            <person name="Xiong Z."/>
            <person name="Dong J."/>
            <person name="Xue Y."/>
            <person name="Zhu Y."/>
            <person name="Xu X."/>
            <person name="Sun L."/>
            <person name="Chen S."/>
            <person name="Nie H."/>
            <person name="Peng J."/>
            <person name="Xu J."/>
            <person name="Wang Y."/>
            <person name="Yuan Z."/>
            <person name="Wen Y."/>
            <person name="Yao Z."/>
            <person name="Shen Y."/>
            <person name="Qiang B."/>
            <person name="Hou Y."/>
            <person name="Yu J."/>
            <person name="Jin Q."/>
        </authorList>
    </citation>
    <scope>NUCLEOTIDE SEQUENCE [LARGE SCALE GENOMIC DNA]</scope>
    <source>
        <strain>Sb227</strain>
    </source>
</reference>
<sequence length="95" mass="10692">MLHTLHRSPWLTDFAALLRLLSEGDELLLLQDGVTAAVDGNRYLESLRNAPIKVYALNEDLIARGLTGQISNDIIPIDYTDFVRLTVKHSSQMAW</sequence>
<evidence type="ECO:0000255" key="1">
    <source>
        <dbReference type="HAMAP-Rule" id="MF_01564"/>
    </source>
</evidence>
<dbReference type="EMBL" id="CP000036">
    <property type="status" value="NOT_ANNOTATED_CDS"/>
    <property type="molecule type" value="Genomic_DNA"/>
</dbReference>
<dbReference type="RefSeq" id="WP_000903377.1">
    <property type="nucleotide sequence ID" value="NC_007613.1"/>
</dbReference>
<dbReference type="SMR" id="P0C1C4"/>
<dbReference type="GeneID" id="75206286"/>
<dbReference type="Proteomes" id="UP000007067">
    <property type="component" value="Chromosome"/>
</dbReference>
<dbReference type="GO" id="GO:1990228">
    <property type="term" value="C:sulfurtransferase complex"/>
    <property type="evidence" value="ECO:0007669"/>
    <property type="project" value="TreeGrafter"/>
</dbReference>
<dbReference type="GO" id="GO:0002143">
    <property type="term" value="P:tRNA wobble position uridine thiolation"/>
    <property type="evidence" value="ECO:0007669"/>
    <property type="project" value="InterPro"/>
</dbReference>
<dbReference type="FunFam" id="3.40.1260.10:FF:000002">
    <property type="entry name" value="Sulfurtransferase TusB"/>
    <property type="match status" value="1"/>
</dbReference>
<dbReference type="Gene3D" id="3.40.1260.10">
    <property type="entry name" value="DsrEFH-like"/>
    <property type="match status" value="1"/>
</dbReference>
<dbReference type="HAMAP" id="MF_01564">
    <property type="entry name" value="Thiourid_synth_B"/>
    <property type="match status" value="1"/>
</dbReference>
<dbReference type="InterPro" id="IPR027396">
    <property type="entry name" value="DsrEFH-like"/>
</dbReference>
<dbReference type="InterPro" id="IPR023526">
    <property type="entry name" value="Sulphur_relay_TusB"/>
</dbReference>
<dbReference type="InterPro" id="IPR007215">
    <property type="entry name" value="Sulphur_relay_TusB/DsrH"/>
</dbReference>
<dbReference type="NCBIfam" id="NF010035">
    <property type="entry name" value="PRK13510.1"/>
    <property type="match status" value="1"/>
</dbReference>
<dbReference type="NCBIfam" id="TIGR03011">
    <property type="entry name" value="sulf_tusB_dsrH"/>
    <property type="match status" value="1"/>
</dbReference>
<dbReference type="PANTHER" id="PTHR37526">
    <property type="entry name" value="PROTEIN TUSB"/>
    <property type="match status" value="1"/>
</dbReference>
<dbReference type="PANTHER" id="PTHR37526:SF1">
    <property type="entry name" value="PROTEIN TUSB"/>
    <property type="match status" value="1"/>
</dbReference>
<dbReference type="Pfam" id="PF04077">
    <property type="entry name" value="DsrH"/>
    <property type="match status" value="1"/>
</dbReference>
<dbReference type="SUPFAM" id="SSF75169">
    <property type="entry name" value="DsrEFH-like"/>
    <property type="match status" value="1"/>
</dbReference>